<keyword id="KW-0963">Cytoplasm</keyword>
<keyword id="KW-0539">Nucleus</keyword>
<keyword id="KW-0647">Proteasome</keyword>
<organism>
    <name type="scientific">Cryptococcus neoformans var. neoformans serotype D (strain B-3501A)</name>
    <name type="common">Filobasidiella neoformans</name>
    <dbReference type="NCBI Taxonomy" id="283643"/>
    <lineage>
        <taxon>Eukaryota</taxon>
        <taxon>Fungi</taxon>
        <taxon>Dikarya</taxon>
        <taxon>Basidiomycota</taxon>
        <taxon>Agaricomycotina</taxon>
        <taxon>Tremellomycetes</taxon>
        <taxon>Tremellales</taxon>
        <taxon>Cryptococcaceae</taxon>
        <taxon>Cryptococcus</taxon>
        <taxon>Cryptococcus neoformans species complex</taxon>
    </lineage>
</organism>
<proteinExistence type="inferred from homology"/>
<reference key="1">
    <citation type="journal article" date="2005" name="Science">
        <title>The genome of the basidiomycetous yeast and human pathogen Cryptococcus neoformans.</title>
        <authorList>
            <person name="Loftus B.J."/>
            <person name="Fung E."/>
            <person name="Roncaglia P."/>
            <person name="Rowley D."/>
            <person name="Amedeo P."/>
            <person name="Bruno D."/>
            <person name="Vamathevan J."/>
            <person name="Miranda M."/>
            <person name="Anderson I.J."/>
            <person name="Fraser J.A."/>
            <person name="Allen J.E."/>
            <person name="Bosdet I.E."/>
            <person name="Brent M.R."/>
            <person name="Chiu R."/>
            <person name="Doering T.L."/>
            <person name="Donlin M.J."/>
            <person name="D'Souza C.A."/>
            <person name="Fox D.S."/>
            <person name="Grinberg V."/>
            <person name="Fu J."/>
            <person name="Fukushima M."/>
            <person name="Haas B.J."/>
            <person name="Huang J.C."/>
            <person name="Janbon G."/>
            <person name="Jones S.J.M."/>
            <person name="Koo H.L."/>
            <person name="Krzywinski M.I."/>
            <person name="Kwon-Chung K.J."/>
            <person name="Lengeler K.B."/>
            <person name="Maiti R."/>
            <person name="Marra M.A."/>
            <person name="Marra R.E."/>
            <person name="Mathewson C.A."/>
            <person name="Mitchell T.G."/>
            <person name="Pertea M."/>
            <person name="Riggs F.R."/>
            <person name="Salzberg S.L."/>
            <person name="Schein J.E."/>
            <person name="Shvartsbeyn A."/>
            <person name="Shin H."/>
            <person name="Shumway M."/>
            <person name="Specht C.A."/>
            <person name="Suh B.B."/>
            <person name="Tenney A."/>
            <person name="Utterback T.R."/>
            <person name="Wickes B.L."/>
            <person name="Wortman J.R."/>
            <person name="Wye N.H."/>
            <person name="Kronstad J.W."/>
            <person name="Lodge J.K."/>
            <person name="Heitman J."/>
            <person name="Davis R.W."/>
            <person name="Fraser C.M."/>
            <person name="Hyman R.W."/>
        </authorList>
    </citation>
    <scope>NUCLEOTIDE SEQUENCE [LARGE SCALE GENOMIC DNA]</scope>
    <source>
        <strain>B-3501A</strain>
    </source>
</reference>
<evidence type="ECO:0000250" key="1"/>
<evidence type="ECO:0000255" key="2">
    <source>
        <dbReference type="PROSITE-ProRule" id="PRU00809"/>
    </source>
</evidence>
<sequence length="224" mass="25239">MECSFGITGKDYVILASDMGAGRSIVRMKSDENKLKTLGPHLAMAFSGEPGDTNNFAEYIERNMRLYNIRNHFPLLPPAASAWVRRTLAEAIRSRHPYAVNLLLGGFDTTTSKPHLYWIDYLGTKAIVPYAAHGMGVYVSLSTMDKWWYEDMDKKEGVDLLRKCIDETEKRLTIKFDFNCILIDKNGIHKVDLSQADPIANIQEHPQETEVEAPHPPIEVGISA</sequence>
<protein>
    <recommendedName>
        <fullName>Probable proteasome subunit beta type-4</fullName>
    </recommendedName>
</protein>
<feature type="chain" id="PRO_0000410216" description="Probable proteasome subunit beta type-4">
    <location>
        <begin position="1"/>
        <end position="224"/>
    </location>
</feature>
<dbReference type="EMBL" id="AAEY01000013">
    <property type="protein sequence ID" value="EAL22079.1"/>
    <property type="molecule type" value="Genomic_DNA"/>
</dbReference>
<dbReference type="RefSeq" id="XP_776726.1">
    <property type="nucleotide sequence ID" value="XM_771633.1"/>
</dbReference>
<dbReference type="SMR" id="P0CQ13"/>
<dbReference type="EnsemblFungi" id="AAW42482">
    <property type="protein sequence ID" value="AAW42482"/>
    <property type="gene ID" value="CNC04990"/>
</dbReference>
<dbReference type="GeneID" id="4934882"/>
<dbReference type="KEGG" id="cnb:CNBC2170"/>
<dbReference type="VEuPathDB" id="FungiDB:CNBC2170"/>
<dbReference type="HOGENOM" id="CLU_035750_12_1_1"/>
<dbReference type="OrthoDB" id="235at5206"/>
<dbReference type="GO" id="GO:0005789">
    <property type="term" value="C:endoplasmic reticulum membrane"/>
    <property type="evidence" value="ECO:0007669"/>
    <property type="project" value="EnsemblFungi"/>
</dbReference>
<dbReference type="GO" id="GO:0005634">
    <property type="term" value="C:nucleus"/>
    <property type="evidence" value="ECO:0007669"/>
    <property type="project" value="UniProtKB-SubCell"/>
</dbReference>
<dbReference type="GO" id="GO:0019774">
    <property type="term" value="C:proteasome core complex, beta-subunit complex"/>
    <property type="evidence" value="ECO:0007669"/>
    <property type="project" value="EnsemblFungi"/>
</dbReference>
<dbReference type="GO" id="GO:0061133">
    <property type="term" value="F:endopeptidase activator activity"/>
    <property type="evidence" value="ECO:0007669"/>
    <property type="project" value="EnsemblFungi"/>
</dbReference>
<dbReference type="GO" id="GO:0010499">
    <property type="term" value="P:proteasomal ubiquitin-independent protein catabolic process"/>
    <property type="evidence" value="ECO:0007669"/>
    <property type="project" value="EnsemblFungi"/>
</dbReference>
<dbReference type="GO" id="GO:0043161">
    <property type="term" value="P:proteasome-mediated ubiquitin-dependent protein catabolic process"/>
    <property type="evidence" value="ECO:0007669"/>
    <property type="project" value="EnsemblFungi"/>
</dbReference>
<dbReference type="CDD" id="cd03758">
    <property type="entry name" value="proteasome_beta_type_2"/>
    <property type="match status" value="1"/>
</dbReference>
<dbReference type="FunFam" id="3.60.20.10:FF:000008">
    <property type="entry name" value="Proteasome subunit beta type-4"/>
    <property type="match status" value="1"/>
</dbReference>
<dbReference type="Gene3D" id="3.60.20.10">
    <property type="entry name" value="Glutamine Phosphoribosylpyrophosphate, subunit 1, domain 1"/>
    <property type="match status" value="1"/>
</dbReference>
<dbReference type="InterPro" id="IPR029055">
    <property type="entry name" value="Ntn_hydrolases_N"/>
</dbReference>
<dbReference type="InterPro" id="IPR035206">
    <property type="entry name" value="Proteasome_beta2"/>
</dbReference>
<dbReference type="InterPro" id="IPR016050">
    <property type="entry name" value="Proteasome_bsu_CS"/>
</dbReference>
<dbReference type="InterPro" id="IPR001353">
    <property type="entry name" value="Proteasome_sua/b"/>
</dbReference>
<dbReference type="InterPro" id="IPR023333">
    <property type="entry name" value="Proteasome_suB-type"/>
</dbReference>
<dbReference type="PANTHER" id="PTHR32194">
    <property type="entry name" value="METALLOPROTEASE TLDD"/>
    <property type="match status" value="1"/>
</dbReference>
<dbReference type="PANTHER" id="PTHR32194:SF2">
    <property type="entry name" value="PROTEASOME SUBUNIT BETA TYPE-1"/>
    <property type="match status" value="1"/>
</dbReference>
<dbReference type="Pfam" id="PF00227">
    <property type="entry name" value="Proteasome"/>
    <property type="match status" value="1"/>
</dbReference>
<dbReference type="SUPFAM" id="SSF56235">
    <property type="entry name" value="N-terminal nucleophile aminohydrolases (Ntn hydrolases)"/>
    <property type="match status" value="1"/>
</dbReference>
<dbReference type="PROSITE" id="PS00854">
    <property type="entry name" value="PROTEASOME_BETA_1"/>
    <property type="match status" value="1"/>
</dbReference>
<dbReference type="PROSITE" id="PS51476">
    <property type="entry name" value="PROTEASOME_BETA_2"/>
    <property type="match status" value="1"/>
</dbReference>
<comment type="function">
    <text evidence="1">Non-catalytic component of the proteasome, a multicatalytic proteinase complex which is characterized by its ability to cleave peptides with Arg, Phe, Tyr, Leu, and Glu adjacent to the leaving group at neutral or slightly basic pH. The proteasome has an ATP-dependent proteolytic activity (By similarity).</text>
</comment>
<comment type="subunit">
    <text evidence="1">The 26S proteasome consists of a 20S proteasome core and two 19S regulatory subunits. The 20S proteasome core is composed of 28 subunits that are arranged in four stacked rings, resulting in a barrel-shaped structure. The two end rings are each formed by seven alpha subunits, and the two central rings are each formed by seven beta subunits. The catalytic chamber with the active sites is on the inside of the barrel (By similarity).</text>
</comment>
<comment type="subcellular location">
    <subcellularLocation>
        <location evidence="2">Cytoplasm</location>
    </subcellularLocation>
    <subcellularLocation>
        <location evidence="1">Nucleus</location>
    </subcellularLocation>
</comment>
<comment type="similarity">
    <text evidence="2">Belongs to the peptidase T1B family.</text>
</comment>
<name>PSB4_CRYNB</name>
<gene>
    <name type="primary">CPR1</name>
    <name type="ordered locus">CNBC2170</name>
</gene>
<accession>P0CQ13</accession>
<accession>Q00826</accession>
<accession>Q55WC0</accession>
<accession>Q5KJX9</accession>